<keyword id="KW-0106">Calcium</keyword>
<keyword id="KW-1015">Disulfide bond</keyword>
<keyword id="KW-0325">Glycoprotein</keyword>
<keyword id="KW-0430">Lectin</keyword>
<keyword id="KW-0593">Phospholipase A2 inhibitor</keyword>
<keyword id="KW-0964">Secreted</keyword>
<keyword id="KW-0732">Signal</keyword>
<reference key="1">
    <citation type="submission" date="2008-01" db="EMBL/GenBank/DDBJ databases">
        <title>A profile of the phospholipase A2 inhibitors of the alpha class prospected in Brazilian Crotalidae snakes: structural and phylogenetic analysis.</title>
        <authorList>
            <person name="Estevao-Costa M.I."/>
            <person name="Costa M.A.F."/>
            <person name="Mudado M.A."/>
            <person name="Franco G.R."/>
            <person name="Fortes-Dias C.L."/>
        </authorList>
    </citation>
    <scope>NUCLEOTIDE SEQUENCE [MRNA]</scope>
    <source>
        <tissue>Liver</tissue>
    </source>
</reference>
<dbReference type="EMBL" id="EU421916">
    <property type="protein sequence ID" value="ABZ82333.1"/>
    <property type="molecule type" value="mRNA"/>
</dbReference>
<dbReference type="EMBL" id="EU421917">
    <property type="protein sequence ID" value="ABZ82334.1"/>
    <property type="molecule type" value="mRNA"/>
</dbReference>
<dbReference type="EMBL" id="EU421918">
    <property type="protein sequence ID" value="ABZ82335.1"/>
    <property type="molecule type" value="mRNA"/>
</dbReference>
<dbReference type="EMBL" id="EU421919">
    <property type="protein sequence ID" value="ABZ82336.1"/>
    <property type="molecule type" value="mRNA"/>
</dbReference>
<dbReference type="SMR" id="B1A4P2"/>
<dbReference type="GO" id="GO:0005576">
    <property type="term" value="C:extracellular region"/>
    <property type="evidence" value="ECO:0007669"/>
    <property type="project" value="UniProtKB-SubCell"/>
</dbReference>
<dbReference type="GO" id="GO:0030246">
    <property type="term" value="F:carbohydrate binding"/>
    <property type="evidence" value="ECO:0007669"/>
    <property type="project" value="UniProtKB-KW"/>
</dbReference>
<dbReference type="GO" id="GO:0019834">
    <property type="term" value="F:phospholipase A2 inhibitor activity"/>
    <property type="evidence" value="ECO:0007669"/>
    <property type="project" value="UniProtKB-KW"/>
</dbReference>
<dbReference type="Gene3D" id="3.10.100.10">
    <property type="entry name" value="Mannose-Binding Protein A, subunit A"/>
    <property type="match status" value="1"/>
</dbReference>
<dbReference type="InterPro" id="IPR001304">
    <property type="entry name" value="C-type_lectin-like"/>
</dbReference>
<dbReference type="InterPro" id="IPR016186">
    <property type="entry name" value="C-type_lectin-like/link_sf"/>
</dbReference>
<dbReference type="InterPro" id="IPR018378">
    <property type="entry name" value="C-type_lectin_CS"/>
</dbReference>
<dbReference type="InterPro" id="IPR016187">
    <property type="entry name" value="CTDL_fold"/>
</dbReference>
<dbReference type="Pfam" id="PF00059">
    <property type="entry name" value="Lectin_C"/>
    <property type="match status" value="1"/>
</dbReference>
<dbReference type="SUPFAM" id="SSF56436">
    <property type="entry name" value="C-type lectin-like"/>
    <property type="match status" value="1"/>
</dbReference>
<dbReference type="PROSITE" id="PS00615">
    <property type="entry name" value="C_TYPE_LECTIN_1"/>
    <property type="match status" value="1"/>
</dbReference>
<dbReference type="PROSITE" id="PS50041">
    <property type="entry name" value="C_TYPE_LECTIN_2"/>
    <property type="match status" value="1"/>
</dbReference>
<name>PLIAB_BOTJR</name>
<feature type="signal peptide" evidence="1">
    <location>
        <begin position="1"/>
        <end position="19"/>
    </location>
</feature>
<feature type="chain" id="PRO_0000355231" description="Phospholipase A2 inhibitor">
    <location>
        <begin position="20"/>
        <end position="166"/>
    </location>
</feature>
<feature type="domain" description="C-type lectin" evidence="5">
    <location>
        <begin position="46"/>
        <end position="161"/>
    </location>
</feature>
<feature type="glycosylation site" description="N-linked (GlcNAc...) asparagine" evidence="4">
    <location>
        <position position="122"/>
    </location>
</feature>
<feature type="disulfide bond" evidence="3">
    <location>
        <begin position="83"/>
        <end position="160"/>
    </location>
</feature>
<feature type="disulfide bond" evidence="3">
    <location>
        <begin position="138"/>
        <end position="152"/>
    </location>
</feature>
<feature type="sequence conflict" description="In Ref. 1; ABZ82334." evidence="6" ref="1">
    <original>DEV</original>
    <variation>HEE</variation>
    <location>
        <begin position="20"/>
        <end position="22"/>
    </location>
</feature>
<feature type="sequence conflict" description="In Ref. 1; ABZ82334." evidence="6" ref="1">
    <original>RKL</original>
    <variation>GKV</variation>
    <location>
        <begin position="26"/>
        <end position="28"/>
    </location>
</feature>
<feature type="sequence conflict" description="In Ref. 1; ABZ82334." evidence="6" ref="1">
    <original>Q</original>
    <variation>D</variation>
    <location>
        <position position="81"/>
    </location>
</feature>
<feature type="sequence conflict" description="In Ref. 1; ABZ82334/ABZ82336." evidence="6" ref="1">
    <original>Q</original>
    <variation>K</variation>
    <location>
        <position position="85"/>
    </location>
</feature>
<proteinExistence type="evidence at transcript level"/>
<evidence type="ECO:0000250" key="1"/>
<evidence type="ECO:0000250" key="2">
    <source>
        <dbReference type="UniProtKB" id="A1XRN2"/>
    </source>
</evidence>
<evidence type="ECO:0000250" key="3">
    <source>
        <dbReference type="UniProtKB" id="P21755"/>
    </source>
</evidence>
<evidence type="ECO:0000255" key="4"/>
<evidence type="ECO:0000255" key="5">
    <source>
        <dbReference type="PROSITE-ProRule" id="PRU00040"/>
    </source>
</evidence>
<evidence type="ECO:0000305" key="6"/>
<evidence type="ECO:0000305" key="7">
    <source ref="1"/>
</evidence>
<accession>B1A4P2</accession>
<accession>B1A4P3</accession>
<accession>B1A4P5</accession>
<sequence length="166" mass="18394">MRLILLSGLLLLGIFLANGDEVDPDRKLLNSLIDALMHLQREFANLKGSFLIVHKARSFGSGSERMYVTNKEIKNFEALRQICEQADGHIPSPQLENQNKAFANVLERHGKEAYLVVGDSANFTNWAAGEPNKAAGACVKADTHGSWHSASCDDNLLVVCEFYFML</sequence>
<protein>
    <recommendedName>
        <fullName>Phospholipase A2 inhibitor</fullName>
        <shortName>alpha-PLI</shortName>
    </recommendedName>
</protein>
<organism>
    <name type="scientific">Bothrops jararacussu</name>
    <name type="common">Jararacussu</name>
    <dbReference type="NCBI Taxonomy" id="8726"/>
    <lineage>
        <taxon>Eukaryota</taxon>
        <taxon>Metazoa</taxon>
        <taxon>Chordata</taxon>
        <taxon>Craniata</taxon>
        <taxon>Vertebrata</taxon>
        <taxon>Euteleostomi</taxon>
        <taxon>Lepidosauria</taxon>
        <taxon>Squamata</taxon>
        <taxon>Bifurcata</taxon>
        <taxon>Unidentata</taxon>
        <taxon>Episquamata</taxon>
        <taxon>Toxicofera</taxon>
        <taxon>Serpentes</taxon>
        <taxon>Colubroidea</taxon>
        <taxon>Viperidae</taxon>
        <taxon>Crotalinae</taxon>
        <taxon>Bothrops</taxon>
    </lineage>
</organism>
<comment type="function">
    <text evidence="1">This phospholipase A2 inhibitor binds directly phospholipase A2 in the presence or absence of calcium.</text>
</comment>
<comment type="subunit">
    <text evidence="2">Homotrimer; non-covalently linked.</text>
</comment>
<comment type="subcellular location">
    <subcellularLocation>
        <location evidence="7">Secreted</location>
    </subcellularLocation>
    <text evidence="6">Secreted in plasma.</text>
</comment>
<comment type="tissue specificity">
    <text evidence="7">Expressed by the liver.</text>
</comment>
<comment type="similarity">
    <text evidence="6">Belongs to the alpha-type phospholipase A2 inhibitor family.</text>
</comment>